<comment type="function">
    <text evidence="1">Plays a role in lysophospholipid acylation. Transfers fatty acids to the 1-position via an enzyme-bound acyl-ACP intermediate in the presence of ATP and magnesium. Its physiological function is to regenerate phosphatidylethanolamine from 2-acyl-glycero-3-phosphoethanolamine (2-acyl-GPE) formed by transacylation reactions or degradation by phospholipase A1.</text>
</comment>
<comment type="catalytic activity">
    <reaction evidence="1">
        <text>a 2-acyl-sn-glycero-3-phosphoethanolamine + a fatty acyl-[ACP] = a 1,2-diacyl-sn-glycero-3-phosphoethanolamine + holo-[ACP]</text>
        <dbReference type="Rhea" id="RHEA:10304"/>
        <dbReference type="Rhea" id="RHEA-COMP:9685"/>
        <dbReference type="Rhea" id="RHEA-COMP:14125"/>
        <dbReference type="ChEBI" id="CHEBI:64479"/>
        <dbReference type="ChEBI" id="CHEBI:64612"/>
        <dbReference type="ChEBI" id="CHEBI:65213"/>
        <dbReference type="ChEBI" id="CHEBI:138651"/>
        <dbReference type="EC" id="2.3.1.40"/>
    </reaction>
</comment>
<comment type="catalytic activity">
    <reaction evidence="1">
        <text>a long-chain fatty acid + holo-[ACP] + ATP = a long-chain fatty acyl-[ACP] + AMP + diphosphate</text>
        <dbReference type="Rhea" id="RHEA:45588"/>
        <dbReference type="Rhea" id="RHEA-COMP:9685"/>
        <dbReference type="Rhea" id="RHEA-COMP:12682"/>
        <dbReference type="ChEBI" id="CHEBI:30616"/>
        <dbReference type="ChEBI" id="CHEBI:33019"/>
        <dbReference type="ChEBI" id="CHEBI:57560"/>
        <dbReference type="ChEBI" id="CHEBI:64479"/>
        <dbReference type="ChEBI" id="CHEBI:133243"/>
        <dbReference type="ChEBI" id="CHEBI:456215"/>
        <dbReference type="EC" id="6.2.1.20"/>
    </reaction>
</comment>
<comment type="subcellular location">
    <subcellularLocation>
        <location evidence="1">Cell inner membrane</location>
        <topology evidence="1">Multi-pass membrane protein</topology>
    </subcellularLocation>
</comment>
<comment type="similarity">
    <text evidence="1">In the N-terminal section; belongs to the 2-acyl-GPE acetyltransferase family.</text>
</comment>
<comment type="similarity">
    <text evidence="1">In the C-terminal section; belongs to the ATP-dependent AMP-binding enzyme family.</text>
</comment>
<accession>B5Z4F4</accession>
<reference key="1">
    <citation type="journal article" date="2011" name="Proc. Natl. Acad. Sci. U.S.A.">
        <title>Genomic anatomy of Escherichia coli O157:H7 outbreaks.</title>
        <authorList>
            <person name="Eppinger M."/>
            <person name="Mammel M.K."/>
            <person name="Leclerc J.E."/>
            <person name="Ravel J."/>
            <person name="Cebula T.A."/>
        </authorList>
    </citation>
    <scope>NUCLEOTIDE SEQUENCE [LARGE SCALE GENOMIC DNA]</scope>
    <source>
        <strain>EC4115 / EHEC</strain>
    </source>
</reference>
<proteinExistence type="inferred from homology"/>
<feature type="chain" id="PRO_1000137886" description="Bifunctional protein Aas">
    <location>
        <begin position="1"/>
        <end position="719"/>
    </location>
</feature>
<feature type="transmembrane region" description="Helical" evidence="1">
    <location>
        <begin position="258"/>
        <end position="277"/>
    </location>
</feature>
<feature type="transmembrane region" description="Helical" evidence="1">
    <location>
        <begin position="409"/>
        <end position="433"/>
    </location>
</feature>
<feature type="region of interest" description="Acyltransferase">
    <location>
        <begin position="15"/>
        <end position="138"/>
    </location>
</feature>
<feature type="region of interest" description="AMP-binding">
    <location>
        <begin position="233"/>
        <end position="646"/>
    </location>
</feature>
<feature type="active site" evidence="1">
    <location>
        <position position="36"/>
    </location>
</feature>
<name>AAS_ECO5E</name>
<sequence>MLFSFFRNLCRVLYRVRVTGDPQALKGERVLITPNHVSFIDGILLGLFLPVRPVFAVYTSISQQWYMRWLKSFIDFVPLDPTQPMAIKHLVRLVEQGRPVVIFPEGRITTTGSLMKIYDGAGFVAAKSGATVIPVRIEGAELTHFSRLKGLVKRRLFPQITLHILPPTQVEMPDAPRARDRRKIAGEMLHQIMMEARMAVRPRETLYESLLSAMYRFGAGKKCVEDVNFTPDSYRKLLTKTLFVGRILEKYSVEGERIGLMLPNAGISAAVIFGAIARRRIPAMMNYTAGVKGLTSAITAAEIKTIFTSRQFLDKGKLWHLPEQLTQVRWVYLEDLKADVTTADKVWIFAHLLMPRLAQVKQQPEEEALILFTSGSEGHPKGVVHSHKSILANVEQIKTIADFTTNDRFMSALPLFHSFGLTVGLFTPLLTGAEVFLYPSPLHYRIVPELVYDRSCTVLFGTSTFLGHYARFANPYDFYRLRYVVAGAEKLQESTKQLWQDKFGLRILEGYGVTECAPVVSINVPMAAKPGTVGRILPGMDARLLSVPGIEEGGRLQLKGPNIMNGYLRVEKPGVLEVPTAENVRGEMERGWYDTGDIVRFDEQGFVQIQGRAKRFAKIAGEMVSLEMVEQLALGVSPDKVHATAIKSDASKGEALVLFTTDNELTRDKLQQYAREHGVPELAVPRDIRYLKQMPLLGSGKPDFVTLKSWVDEVEQHDE</sequence>
<dbReference type="EC" id="2.3.1.40" evidence="1"/>
<dbReference type="EC" id="6.2.1.20" evidence="1"/>
<dbReference type="EMBL" id="CP001164">
    <property type="protein sequence ID" value="ACI38434.1"/>
    <property type="molecule type" value="Genomic_DNA"/>
</dbReference>
<dbReference type="RefSeq" id="WP_000899007.1">
    <property type="nucleotide sequence ID" value="NC_011353.1"/>
</dbReference>
<dbReference type="SMR" id="B5Z4F4"/>
<dbReference type="KEGG" id="ecf:ECH74115_4103"/>
<dbReference type="HOGENOM" id="CLU_000022_59_8_6"/>
<dbReference type="GO" id="GO:0005886">
    <property type="term" value="C:plasma membrane"/>
    <property type="evidence" value="ECO:0007669"/>
    <property type="project" value="UniProtKB-SubCell"/>
</dbReference>
<dbReference type="GO" id="GO:0008779">
    <property type="term" value="F:acyl-[acyl-carrier-protein]-phospholipid O-acyltransferase activity"/>
    <property type="evidence" value="ECO:0007669"/>
    <property type="project" value="UniProtKB-UniRule"/>
</dbReference>
<dbReference type="GO" id="GO:0005524">
    <property type="term" value="F:ATP binding"/>
    <property type="evidence" value="ECO:0007669"/>
    <property type="project" value="UniProtKB-KW"/>
</dbReference>
<dbReference type="GO" id="GO:0008922">
    <property type="term" value="F:long-chain fatty acid [acyl-carrier-protein] ligase activity"/>
    <property type="evidence" value="ECO:0007669"/>
    <property type="project" value="UniProtKB-UniRule"/>
</dbReference>
<dbReference type="GO" id="GO:0031956">
    <property type="term" value="F:medium-chain fatty acid-CoA ligase activity"/>
    <property type="evidence" value="ECO:0007669"/>
    <property type="project" value="TreeGrafter"/>
</dbReference>
<dbReference type="GO" id="GO:0006631">
    <property type="term" value="P:fatty acid metabolic process"/>
    <property type="evidence" value="ECO:0007669"/>
    <property type="project" value="InterPro"/>
</dbReference>
<dbReference type="GO" id="GO:0008654">
    <property type="term" value="P:phospholipid biosynthetic process"/>
    <property type="evidence" value="ECO:0007669"/>
    <property type="project" value="InterPro"/>
</dbReference>
<dbReference type="CDD" id="cd05909">
    <property type="entry name" value="AAS_C"/>
    <property type="match status" value="1"/>
</dbReference>
<dbReference type="CDD" id="cd07989">
    <property type="entry name" value="LPLAT_AGPAT-like"/>
    <property type="match status" value="1"/>
</dbReference>
<dbReference type="FunFam" id="3.30.300.30:FF:000009">
    <property type="entry name" value="Bifunctional protein Aas"/>
    <property type="match status" value="1"/>
</dbReference>
<dbReference type="FunFam" id="3.40.50.12780:FF:000009">
    <property type="entry name" value="Bifunctional protein Aas"/>
    <property type="match status" value="1"/>
</dbReference>
<dbReference type="Gene3D" id="3.30.300.30">
    <property type="match status" value="1"/>
</dbReference>
<dbReference type="Gene3D" id="3.40.50.12780">
    <property type="entry name" value="N-terminal domain of ligase-like"/>
    <property type="match status" value="1"/>
</dbReference>
<dbReference type="HAMAP" id="MF_01162">
    <property type="entry name" value="Aas"/>
    <property type="match status" value="1"/>
</dbReference>
<dbReference type="InterPro" id="IPR023775">
    <property type="entry name" value="Aas"/>
</dbReference>
<dbReference type="InterPro" id="IPR045851">
    <property type="entry name" value="AMP-bd_C_sf"/>
</dbReference>
<dbReference type="InterPro" id="IPR020845">
    <property type="entry name" value="AMP-binding_CS"/>
</dbReference>
<dbReference type="InterPro" id="IPR000873">
    <property type="entry name" value="AMP-dep_synth/lig_dom"/>
</dbReference>
<dbReference type="InterPro" id="IPR042099">
    <property type="entry name" value="ANL_N_sf"/>
</dbReference>
<dbReference type="InterPro" id="IPR002123">
    <property type="entry name" value="Plipid/glycerol_acylTrfase"/>
</dbReference>
<dbReference type="NCBIfam" id="NF005959">
    <property type="entry name" value="PRK08043.1"/>
    <property type="match status" value="1"/>
</dbReference>
<dbReference type="PANTHER" id="PTHR43201">
    <property type="entry name" value="ACYL-COA SYNTHETASE"/>
    <property type="match status" value="1"/>
</dbReference>
<dbReference type="PANTHER" id="PTHR43201:SF8">
    <property type="entry name" value="ACYL-COA SYNTHETASE FAMILY MEMBER 3"/>
    <property type="match status" value="1"/>
</dbReference>
<dbReference type="Pfam" id="PF01553">
    <property type="entry name" value="Acyltransferase"/>
    <property type="match status" value="1"/>
</dbReference>
<dbReference type="Pfam" id="PF00501">
    <property type="entry name" value="AMP-binding"/>
    <property type="match status" value="1"/>
</dbReference>
<dbReference type="SMART" id="SM00563">
    <property type="entry name" value="PlsC"/>
    <property type="match status" value="1"/>
</dbReference>
<dbReference type="SUPFAM" id="SSF56801">
    <property type="entry name" value="Acetyl-CoA synthetase-like"/>
    <property type="match status" value="1"/>
</dbReference>
<dbReference type="SUPFAM" id="SSF69593">
    <property type="entry name" value="Glycerol-3-phosphate (1)-acyltransferase"/>
    <property type="match status" value="1"/>
</dbReference>
<dbReference type="PROSITE" id="PS00455">
    <property type="entry name" value="AMP_BINDING"/>
    <property type="match status" value="1"/>
</dbReference>
<gene>
    <name evidence="1" type="primary">aas</name>
    <name type="ordered locus">ECH74115_4103</name>
</gene>
<organism>
    <name type="scientific">Escherichia coli O157:H7 (strain EC4115 / EHEC)</name>
    <dbReference type="NCBI Taxonomy" id="444450"/>
    <lineage>
        <taxon>Bacteria</taxon>
        <taxon>Pseudomonadati</taxon>
        <taxon>Pseudomonadota</taxon>
        <taxon>Gammaproteobacteria</taxon>
        <taxon>Enterobacterales</taxon>
        <taxon>Enterobacteriaceae</taxon>
        <taxon>Escherichia</taxon>
    </lineage>
</organism>
<protein>
    <recommendedName>
        <fullName evidence="1">Bifunctional protein Aas</fullName>
    </recommendedName>
    <domain>
        <recommendedName>
            <fullName evidence="1">2-acylglycerophosphoethanolamine acyltransferase</fullName>
            <ecNumber evidence="1">2.3.1.40</ecNumber>
        </recommendedName>
        <alternativeName>
            <fullName evidence="1">2-acyl-GPE acyltransferase</fullName>
        </alternativeName>
        <alternativeName>
            <fullName evidence="1">Acyl-[acyl-carrier-protein]--phospholipid O-acyltransferase</fullName>
        </alternativeName>
    </domain>
    <domain>
        <recommendedName>
            <fullName evidence="1">Acyl-[acyl-carrier-protein] synthetase</fullName>
            <ecNumber evidence="1">6.2.1.20</ecNumber>
        </recommendedName>
        <alternativeName>
            <fullName evidence="1">Acyl-ACP synthetase</fullName>
        </alternativeName>
        <alternativeName>
            <fullName evidence="1">Long-chain-fatty-acid--[acyl-carrier-protein] ligase</fullName>
        </alternativeName>
    </domain>
</protein>
<evidence type="ECO:0000255" key="1">
    <source>
        <dbReference type="HAMAP-Rule" id="MF_01162"/>
    </source>
</evidence>
<keyword id="KW-0012">Acyltransferase</keyword>
<keyword id="KW-0067">ATP-binding</keyword>
<keyword id="KW-0997">Cell inner membrane</keyword>
<keyword id="KW-1003">Cell membrane</keyword>
<keyword id="KW-0436">Ligase</keyword>
<keyword id="KW-0472">Membrane</keyword>
<keyword id="KW-0511">Multifunctional enzyme</keyword>
<keyword id="KW-0547">Nucleotide-binding</keyword>
<keyword id="KW-0808">Transferase</keyword>
<keyword id="KW-0812">Transmembrane</keyword>
<keyword id="KW-1133">Transmembrane helix</keyword>